<feature type="signal peptide" evidence="3">
    <location>
        <begin position="1"/>
        <end position="20"/>
    </location>
</feature>
<feature type="chain" id="PRO_0000324144" description="Macrophage-expressed gene 1 protein">
    <location>
        <begin position="21"/>
        <end position="716"/>
    </location>
</feature>
<feature type="chain" id="PRO_0000459024" description="Macrophage-expressed gene 1 protein, processed form" evidence="1">
    <location>
        <begin position="353"/>
        <end position="632"/>
    </location>
</feature>
<feature type="transmembrane region" description="Beta stranded" evidence="1">
    <location>
        <begin position="113"/>
        <end position="120"/>
    </location>
</feature>
<feature type="transmembrane region" description="Beta stranded" evidence="1">
    <location>
        <begin position="127"/>
        <end position="132"/>
    </location>
</feature>
<feature type="transmembrane region" description="Beta stranded" evidence="1">
    <location>
        <begin position="235"/>
        <end position="244"/>
    </location>
</feature>
<feature type="transmembrane region" description="Beta stranded" evidence="1">
    <location>
        <begin position="248"/>
        <end position="256"/>
    </location>
</feature>
<feature type="transmembrane region" description="Helical" evidence="3">
    <location>
        <begin position="656"/>
        <end position="676"/>
    </location>
</feature>
<feature type="domain" description="MACPF" evidence="4">
    <location>
        <begin position="30"/>
        <end position="345"/>
    </location>
</feature>
<feature type="region of interest" description="P2" evidence="1">
    <location>
        <begin position="413"/>
        <end position="656"/>
    </location>
</feature>
<feature type="region of interest" description="Disordered" evidence="5">
    <location>
        <begin position="693"/>
        <end position="716"/>
    </location>
</feature>
<feature type="compositionally biased region" description="Polar residues" evidence="5">
    <location>
        <begin position="703"/>
        <end position="716"/>
    </location>
</feature>
<feature type="site" description="Cleavage; by LGMN" evidence="1">
    <location>
        <begin position="352"/>
        <end position="353"/>
    </location>
</feature>
<feature type="site" description="Cleavage; by LGMN" evidence="1">
    <location>
        <begin position="357"/>
        <end position="358"/>
    </location>
</feature>
<feature type="site" description="Cleavage; by LGMN" evidence="1">
    <location>
        <begin position="359"/>
        <end position="360"/>
    </location>
</feature>
<feature type="site" description="Cleavage; by trypsin" evidence="1">
    <location>
        <begin position="631"/>
        <end position="632"/>
    </location>
</feature>
<feature type="glycosylation site" description="N-linked (GlcNAc...) asparagine" evidence="3">
    <location>
        <position position="168"/>
    </location>
</feature>
<feature type="glycosylation site" description="N-linked (GlcNAc...) asparagine" evidence="3">
    <location>
        <position position="185"/>
    </location>
</feature>
<feature type="glycosylation site" description="N-linked (GlcNAc...) asparagine" evidence="3">
    <location>
        <position position="269"/>
    </location>
</feature>
<feature type="glycosylation site" description="N-linked (GlcNAc...) asparagine" evidence="3">
    <location>
        <position position="375"/>
    </location>
</feature>
<feature type="disulfide bond" evidence="1">
    <location>
        <begin position="34"/>
        <end position="70"/>
    </location>
</feature>
<feature type="disulfide bond" evidence="1">
    <location>
        <begin position="350"/>
        <end position="369"/>
    </location>
</feature>
<feature type="disulfide bond" evidence="1">
    <location>
        <begin position="385"/>
        <end position="397"/>
    </location>
</feature>
<feature type="disulfide bond" evidence="1">
    <location>
        <begin position="435"/>
        <end position="449"/>
    </location>
</feature>
<feature type="disulfide bond" evidence="1">
    <location>
        <begin position="439"/>
        <end position="445"/>
    </location>
</feature>
<feature type="disulfide bond" evidence="1">
    <location>
        <begin position="534"/>
        <end position="572"/>
    </location>
</feature>
<feature type="disulfide bond" evidence="1">
    <location>
        <begin position="557"/>
        <end position="577"/>
    </location>
</feature>
<evidence type="ECO:0000250" key="1">
    <source>
        <dbReference type="UniProtKB" id="A1L314"/>
    </source>
</evidence>
<evidence type="ECO:0000250" key="2">
    <source>
        <dbReference type="UniProtKB" id="Q2M385"/>
    </source>
</evidence>
<evidence type="ECO:0000255" key="3"/>
<evidence type="ECO:0000255" key="4">
    <source>
        <dbReference type="PROSITE-ProRule" id="PRU00745"/>
    </source>
</evidence>
<evidence type="ECO:0000256" key="5">
    <source>
        <dbReference type="SAM" id="MobiDB-lite"/>
    </source>
</evidence>
<evidence type="ECO:0000305" key="6"/>
<sequence>MNNFRATILFWAVAAWVTSGKPLGEMDEVGVQKCKNALKLPVLEVLPGGGWDNLRNVDMGRVMELTYSNCRTTEDGQYIIPDEIFTIPQKQSNLEMNSEILESWANYQSSTSYSINTELSLFSKVNGKFSTEFQRMKTLQLKDQAITTRVQVRNLIYTVKINPALELNWSFRKELLDISDRLENNQTRMATYLAELLVLNYGTHVITSVDAGAALIQEDHIRASFLQDSQSSRSAVTASAGLAFQNTVNFKFEENYTSQNVLTKSYLSNRTNSRVQSIGGVPFYPGITLQAWQQGITNHLVAIDRSGLPLHFFINPNMLPDLPGPLVKKVSKTVETAVKRYYTFNTYPGCTDLNSPNFNFQANTDDGSCEGKMTNFSFGGVYQECTQLSGNRDVLLCQKLEQKNPLTGDFSCPSGYSPVRLLSQIHEEGYNHLECHRKCTLLVFCKTVCEDVFQVAKAEFRAFWCVASSQVPENSGLLFGGLFSSKSINPMTNAQSCPAGYFPLSLFENLKVCVSQDYELGSRFAVPFGGFFSCTVGNPLVDPAISRDLGVPSLKKCPGGFSQHLALISDGCQVSYCVKSGLFTGGSLPPARLPPFTRPPLMSQAATNTVIVTNSENARSWIKDSQTHQWRLGEPIELRRAMNDIHGDGGGLSGGAAAGVTLGVTTILAVVITLAIYGTRKFKKKAYQAIEERQSLVPGTAATGDTTYQEQGQSPA</sequence>
<dbReference type="EMBL" id="CR858589">
    <property type="protein sequence ID" value="CAH90811.1"/>
    <property type="molecule type" value="mRNA"/>
</dbReference>
<dbReference type="RefSeq" id="NP_001125461.1">
    <property type="nucleotide sequence ID" value="NM_001131989.1"/>
</dbReference>
<dbReference type="SMR" id="Q5RBP9"/>
<dbReference type="FunCoup" id="Q5RBP9">
    <property type="interactions" value="14"/>
</dbReference>
<dbReference type="STRING" id="9601.ENSPPYP00000003725"/>
<dbReference type="GlyCosmos" id="Q5RBP9">
    <property type="glycosylation" value="5 sites, No reported glycans"/>
</dbReference>
<dbReference type="GeneID" id="100172369"/>
<dbReference type="KEGG" id="pon:100172369"/>
<dbReference type="CTD" id="219972"/>
<dbReference type="eggNOG" id="ENOG502QRKR">
    <property type="taxonomic scope" value="Eukaryota"/>
</dbReference>
<dbReference type="InParanoid" id="Q5RBP9"/>
<dbReference type="OrthoDB" id="5950457at2759"/>
<dbReference type="Proteomes" id="UP000001595">
    <property type="component" value="Unplaced"/>
</dbReference>
<dbReference type="GO" id="GO:0031410">
    <property type="term" value="C:cytoplasmic vesicle"/>
    <property type="evidence" value="ECO:0000250"/>
    <property type="project" value="UniProtKB"/>
</dbReference>
<dbReference type="GO" id="GO:0045335">
    <property type="term" value="C:phagocytic vesicle"/>
    <property type="evidence" value="ECO:0000250"/>
    <property type="project" value="UniProtKB"/>
</dbReference>
<dbReference type="GO" id="GO:0030670">
    <property type="term" value="C:phagocytic vesicle membrane"/>
    <property type="evidence" value="ECO:0000250"/>
    <property type="project" value="UniProtKB"/>
</dbReference>
<dbReference type="GO" id="GO:0061474">
    <property type="term" value="C:phagolysosome membrane"/>
    <property type="evidence" value="ECO:0000250"/>
    <property type="project" value="UniProtKB"/>
</dbReference>
<dbReference type="GO" id="GO:0022829">
    <property type="term" value="F:wide pore channel activity"/>
    <property type="evidence" value="ECO:0000250"/>
    <property type="project" value="UniProtKB"/>
</dbReference>
<dbReference type="GO" id="GO:0002250">
    <property type="term" value="P:adaptive immune response"/>
    <property type="evidence" value="ECO:0007669"/>
    <property type="project" value="UniProtKB-KW"/>
</dbReference>
<dbReference type="GO" id="GO:0140367">
    <property type="term" value="P:antibacterial innate immune response"/>
    <property type="evidence" value="ECO:0000250"/>
    <property type="project" value="UniProtKB"/>
</dbReference>
<dbReference type="GO" id="GO:0002478">
    <property type="term" value="P:antigen processing and presentation of exogenous peptide antigen"/>
    <property type="evidence" value="ECO:0000250"/>
    <property type="project" value="UniProtKB"/>
</dbReference>
<dbReference type="GO" id="GO:0042590">
    <property type="term" value="P:antigen processing and presentation of exogenous peptide antigen via MHC class I"/>
    <property type="evidence" value="ECO:0000250"/>
    <property type="project" value="UniProtKB"/>
</dbReference>
<dbReference type="GO" id="GO:0042742">
    <property type="term" value="P:defense response to bacterium"/>
    <property type="evidence" value="ECO:0000250"/>
    <property type="project" value="UniProtKB"/>
</dbReference>
<dbReference type="GO" id="GO:0050829">
    <property type="term" value="P:defense response to Gram-negative bacterium"/>
    <property type="evidence" value="ECO:0000250"/>
    <property type="project" value="UniProtKB"/>
</dbReference>
<dbReference type="GO" id="GO:0050830">
    <property type="term" value="P:defense response to Gram-positive bacterium"/>
    <property type="evidence" value="ECO:0000250"/>
    <property type="project" value="UniProtKB"/>
</dbReference>
<dbReference type="GO" id="GO:0002468">
    <property type="term" value="P:dendritic cell antigen processing and presentation"/>
    <property type="evidence" value="ECO:0000250"/>
    <property type="project" value="UniProtKB"/>
</dbReference>
<dbReference type="CDD" id="cd22579">
    <property type="entry name" value="MPEG1_P2"/>
    <property type="match status" value="1"/>
</dbReference>
<dbReference type="InterPro" id="IPR020864">
    <property type="entry name" value="MACPF"/>
</dbReference>
<dbReference type="InterPro" id="IPR039707">
    <property type="entry name" value="MPEG1"/>
</dbReference>
<dbReference type="PANTHER" id="PTHR31463">
    <property type="entry name" value="MACROPHAGE-EXPRESSED GENE 1 PROTEIN"/>
    <property type="match status" value="1"/>
</dbReference>
<dbReference type="PANTHER" id="PTHR31463:SF4">
    <property type="entry name" value="MACROPHAGE-EXPRESSED GENE 1 PROTEIN"/>
    <property type="match status" value="1"/>
</dbReference>
<dbReference type="Pfam" id="PF01823">
    <property type="entry name" value="MACPF"/>
    <property type="match status" value="1"/>
</dbReference>
<dbReference type="SMART" id="SM00457">
    <property type="entry name" value="MACPF"/>
    <property type="match status" value="1"/>
</dbReference>
<dbReference type="PROSITE" id="PS51412">
    <property type="entry name" value="MACPF_2"/>
    <property type="match status" value="1"/>
</dbReference>
<accession>Q5RBP9</accession>
<reference key="1">
    <citation type="submission" date="2004-11" db="EMBL/GenBank/DDBJ databases">
        <authorList>
            <consortium name="The German cDNA consortium"/>
        </authorList>
    </citation>
    <scope>NUCLEOTIDE SEQUENCE [LARGE SCALE MRNA]</scope>
    <source>
        <tissue>Kidney</tissue>
    </source>
</reference>
<organism>
    <name type="scientific">Pongo abelii</name>
    <name type="common">Sumatran orangutan</name>
    <name type="synonym">Pongo pygmaeus abelii</name>
    <dbReference type="NCBI Taxonomy" id="9601"/>
    <lineage>
        <taxon>Eukaryota</taxon>
        <taxon>Metazoa</taxon>
        <taxon>Chordata</taxon>
        <taxon>Craniata</taxon>
        <taxon>Vertebrata</taxon>
        <taxon>Euteleostomi</taxon>
        <taxon>Mammalia</taxon>
        <taxon>Eutheria</taxon>
        <taxon>Euarchontoglires</taxon>
        <taxon>Primates</taxon>
        <taxon>Haplorrhini</taxon>
        <taxon>Catarrhini</taxon>
        <taxon>Hominidae</taxon>
        <taxon>Pongo</taxon>
    </lineage>
</organism>
<gene>
    <name type="primary">MPEG1</name>
</gene>
<name>MPEG1_PONAB</name>
<proteinExistence type="evidence at transcript level"/>
<comment type="function">
    <text evidence="1">Pore-forming protein involved in both innate and adaptive immunity. Plays a central role in antigen cross-presentation in dendritic cells by forming a pore in antigen-containing compartments, thereby promoting delivery of antigens for cross-presentation. Also involved in innate immune response following bacterial infection; shows antibacterial activity against a wide spectrum of Gram-positive, Gram-negative and acid-fast bacteria. Reduces the viability of the intracytosolic pathogen L.monocytogenes by inhibiting acidification of the phagocytic vacuole of host cells which restricts bacterial translocation from the vacuole to the cytosol. Required for the antibacterial activity of reactive oxygen species and nitric oxide.</text>
</comment>
<comment type="function">
    <molecule>Macrophage-expressed gene 1 protein, processed form</molecule>
    <text evidence="1">Pore-forming protein that plays a central role in antigen cross-presentation in dendritic cells by mediating delivery of antigens for cross-presentation. Dendritic cells bridge innate and adaptive immunity by capturing exogenous antigens on MHC class-I molecules and presenting them to naive CD8(+) T-cells. Acts by forming a pore in antigen-containing compartments, promoting the release of antigens into the cytosol, enabling generation of MHCI:peptide complexes and T-cell priming.</text>
</comment>
<comment type="activity regulation">
    <text evidence="1">Forms arc- and ring-shaped pre-pores on top of the membrane at neutral to slightly acidic pH conditions and converts to pores upon acidification. Undergoes transition from the pre-pore to the pore in a processive clockwise hand-over-hand process. In the pore state, 2 alpha-helical regions refold into transmembrane hairpins (TMH1 and TMH2) in each protomer that form in the ensemble complex giant beta-barrel transmembrane pores.</text>
</comment>
<comment type="subunit">
    <text evidence="1">Homooligomer; predominantly forms a homooligomeric arc-shaped pore complex instead of complete rings of 16 subunits.</text>
</comment>
<comment type="subcellular location">
    <subcellularLocation>
        <location evidence="1">Cytoplasmic vesicle membrane</location>
        <topology evidence="1">Multi-pass membrane protein</topology>
    </subcellularLocation>
    <text evidence="1">Bacterial infection induces translocation of the cytoplasmic vesicles to bacterium-containing phagocytic vesicles and fusing of the vesicles.</text>
</comment>
<comment type="subcellular location">
    <molecule>Macrophage-expressed gene 1 protein, processed form</molecule>
    <subcellularLocation>
        <location evidence="1">Cytoplasmic vesicle</location>
        <location evidence="1">Phagosome membrane</location>
        <topology evidence="1">Multi-pass membrane protein</topology>
    </subcellularLocation>
    <text evidence="1">Proteolytically processed in lysosomes, leading to its maturation and forms pores in the membrane of antigen-containing phagosomes.</text>
</comment>
<comment type="domain">
    <text evidence="1">The MACPF domain includes the central machinery of pore formation: acidification causes a significant structural rearrangement, leading to oligomerization and deployment of the transmembrane beta-strands (named TMH1 and TMH2) that enter the membrane as amphipathic beta-hairpins.</text>
</comment>
<comment type="domain">
    <text evidence="1">The P2 region contains beta-hairpins to interact with target membranes.</text>
</comment>
<comment type="PTM">
    <text evidence="1">Proteolytically processed in two steps to generate the Macrophage-expressed gene 1 protein, processed form: cleaved by trypsin in proximity of the helical transmembrane domain releases the ectodomain into the lysosomal lumen to orient the pore-forming domain toward the endogenous membranes, and processed by the asparagine endopeptidase (LGMN). Proteolytic processing in antigen-containing vesicles is pH-dependent.</text>
</comment>
<comment type="PTM">
    <text evidence="1">Monoubiquitinated in response to bacterial infection; ubiquitination is required for vesicular localization and antibacterial activity and can be blocked by bacterial cell cycle inhibiting factor (cif).</text>
</comment>
<comment type="similarity">
    <text evidence="6">Belongs to the MPEG1 family.</text>
</comment>
<keyword id="KW-1064">Adaptive immunity</keyword>
<keyword id="KW-0968">Cytoplasmic vesicle</keyword>
<keyword id="KW-1015">Disulfide bond</keyword>
<keyword id="KW-0325">Glycoprotein</keyword>
<keyword id="KW-0391">Immunity</keyword>
<keyword id="KW-0399">Innate immunity</keyword>
<keyword id="KW-0472">Membrane</keyword>
<keyword id="KW-1185">Reference proteome</keyword>
<keyword id="KW-0732">Signal</keyword>
<keyword id="KW-0812">Transmembrane</keyword>
<keyword id="KW-1134">Transmembrane beta strand</keyword>
<keyword id="KW-1133">Transmembrane helix</keyword>
<keyword id="KW-0832">Ubl conjugation</keyword>
<protein>
    <recommendedName>
        <fullName>Macrophage-expressed gene 1 protein</fullName>
        <shortName>Macrophage gene 1 protein</shortName>
        <shortName>Mpg-1</shortName>
    </recommendedName>
    <alternativeName>
        <fullName evidence="2">Perforin-2</fullName>
        <shortName evidence="2">P-2</shortName>
    </alternativeName>
    <component>
        <recommendedName>
            <fullName evidence="6">Macrophage-expressed gene 1 protein, processed form</fullName>
        </recommendedName>
    </component>
</protein>